<accession>Q85440</accession>
<proteinExistence type="evidence at transcript level"/>
<name>P9_RDVF</name>
<reference key="1">
    <citation type="journal article" date="1995" name="Ping Tu Hsueh Pao">
        <title>cDNA cloning and sequence analysis of rice dwarf virus genome segment S9.</title>
        <authorList>
            <person name="Qu L."/>
            <person name="Li Y."/>
            <person name="Zhu Y."/>
            <person name="Pan N."/>
            <person name="Chen Z."/>
        </authorList>
    </citation>
    <scope>NUCLEOTIDE SEQUENCE [MRNA]</scope>
</reference>
<reference key="2">
    <citation type="journal article" date="2006" name="J. Gen. Virol.">
        <title>Pns12 protein of Rice dwarf virus is essential for formation of viroplasms and nucleation of viral-assembly complexes.</title>
        <authorList>
            <person name="Wei T."/>
            <person name="Shimizu T."/>
            <person name="Hagiwara K."/>
            <person name="Kikuchi A."/>
            <person name="Moriyasu Y."/>
            <person name="Suzuki N."/>
            <person name="Chen H."/>
            <person name="Omura T."/>
        </authorList>
    </citation>
    <scope>SUBCELLULAR LOCATION</scope>
</reference>
<protein>
    <recommendedName>
        <fullName>Minor outer capsid protein P9</fullName>
    </recommendedName>
</protein>
<feature type="chain" id="PRO_0000222794" description="Minor outer capsid protein P9">
    <location>
        <begin position="1"/>
        <end position="351"/>
    </location>
</feature>
<feature type="region of interest" description="Disordered" evidence="2">
    <location>
        <begin position="246"/>
        <end position="330"/>
    </location>
</feature>
<feature type="compositionally biased region" description="Basic and acidic residues" evidence="2">
    <location>
        <begin position="285"/>
        <end position="298"/>
    </location>
</feature>
<feature type="compositionally biased region" description="Acidic residues" evidence="2">
    <location>
        <begin position="315"/>
        <end position="324"/>
    </location>
</feature>
<organismHost>
    <name type="scientific">Alopecurus aequalis</name>
    <dbReference type="NCBI Taxonomy" id="114194"/>
</organismHost>
<organismHost>
    <name type="scientific">Echinochloa crus-galli</name>
    <name type="common">Barnyard grass</name>
    <name type="synonym">Panicum crus-galli</name>
    <dbReference type="NCBI Taxonomy" id="90397"/>
</organismHost>
<organismHost>
    <name type="scientific">Nephotettix cincticeps</name>
    <name type="common">Green rice leafhopper</name>
    <name type="synonym">Selenocephalus cincticeps</name>
    <dbReference type="NCBI Taxonomy" id="94400"/>
</organismHost>
<organismHost>
    <name type="scientific">Oryza sativa</name>
    <name type="common">Rice</name>
    <dbReference type="NCBI Taxonomy" id="4530"/>
</organismHost>
<organismHost>
    <name type="scientific">Paspalum</name>
    <dbReference type="NCBI Taxonomy" id="147271"/>
</organismHost>
<sequence>MGKLQDGIAIKRINDAITTFKNYKLGELKQGGSMAINTLSNVRAHVGLAWPAILRNCLIHTSSHLGFMKFMIDIATTWKVGAFTLLGSVGDEDPFTDVDLIYTKTCLHLGLKDNDFLQFPEEFAYEANSFLEAQSMNAKVDMLTGVHNIEDKYVFRMQSISKFLKAYYTASEDVAYLTGFIKPDDSKDSILNAELLEAQVTSEVLRVRNLITTKIQKYINLYEDSQLPHFRQAALSYIQDWDVDGGVPAALPQPDTTDDERPVTKPGPSTPTVSKGVDEPEDEEMIRKKVETSKDAPSKADPPGNVSPRGVPALLEDDMSEMDMPDGFHDYLTREHENNFDLSQLGLAPSV</sequence>
<organism>
    <name type="scientific">Rice dwarf virus (isolate Fujian)</name>
    <name type="common">RDV</name>
    <dbReference type="NCBI Taxonomy" id="142804"/>
    <lineage>
        <taxon>Viruses</taxon>
        <taxon>Riboviria</taxon>
        <taxon>Orthornavirae</taxon>
        <taxon>Duplornaviricota</taxon>
        <taxon>Resentoviricetes</taxon>
        <taxon>Reovirales</taxon>
        <taxon>Sedoreoviridae</taxon>
        <taxon>Phytoreovirus</taxon>
        <taxon>Rice dwarf virus</taxon>
    </lineage>
</organism>
<evidence type="ECO:0000250" key="1"/>
<evidence type="ECO:0000256" key="2">
    <source>
        <dbReference type="SAM" id="MobiDB-lite"/>
    </source>
</evidence>
<evidence type="ECO:0000269" key="3">
    <source>
    </source>
</evidence>
<evidence type="ECO:0000305" key="4"/>
<keyword id="KW-0167">Capsid protein</keyword>
<keyword id="KW-1035">Host cytoplasm</keyword>
<keyword id="KW-1152">Outer capsid protein</keyword>
<keyword id="KW-1185">Reference proteome</keyword>
<keyword id="KW-0946">Virion</keyword>
<comment type="function">
    <text evidence="1">Minor outer capsid protein.</text>
</comment>
<comment type="subcellular location">
    <subcellularLocation>
        <location evidence="4">Virion</location>
    </subcellularLocation>
    <subcellularLocation>
        <location evidence="3">Host cytoplasm</location>
    </subcellularLocation>
    <text>Found in the peripheral regions of spherical cytoplasmic structures, called virus factories, that appear early after infection and are the site of viral replication and packaging.</text>
</comment>
<comment type="similarity">
    <text evidence="4">Belongs to the phytoreovirus minor outer capsid protein P9 family.</text>
</comment>
<dbReference type="EMBL" id="U36566">
    <property type="protein sequence ID" value="AAA88765.1"/>
    <property type="molecule type" value="mRNA"/>
</dbReference>
<dbReference type="RefSeq" id="NP_620535.1">
    <property type="nucleotide sequence ID" value="NC_003765.1"/>
</dbReference>
<dbReference type="SMR" id="Q85440"/>
<dbReference type="GeneID" id="956500"/>
<dbReference type="KEGG" id="vg:956500"/>
<dbReference type="Proteomes" id="UP000002239">
    <property type="component" value="Genome"/>
</dbReference>
<dbReference type="GO" id="GO:0030430">
    <property type="term" value="C:host cell cytoplasm"/>
    <property type="evidence" value="ECO:0007669"/>
    <property type="project" value="UniProtKB-SubCell"/>
</dbReference>
<dbReference type="GO" id="GO:0039624">
    <property type="term" value="C:viral outer capsid"/>
    <property type="evidence" value="ECO:0007669"/>
    <property type="project" value="UniProtKB-KW"/>
</dbReference>
<dbReference type="InterPro" id="IPR008776">
    <property type="entry name" value="Phyto_Pns9_10"/>
</dbReference>
<dbReference type="Pfam" id="PF05878">
    <property type="entry name" value="Phyto_Pns9_10"/>
    <property type="match status" value="1"/>
</dbReference>